<comment type="function">
    <text evidence="1">NDH shuttles electrons from NAD(P)H:plastoquinone, via FMN and iron-sulfur (Fe-S) centers, to quinones in the photosynthetic chain and possibly in a chloroplast respiratory chain. The immediate electron acceptor for the enzyme in this species is believed to be plastoquinone. Couples the redox reaction to proton translocation, and thus conserves the redox energy in a proton gradient.</text>
</comment>
<comment type="catalytic activity">
    <reaction evidence="1">
        <text>a plastoquinone + NADH + (n+1) H(+)(in) = a plastoquinol + NAD(+) + n H(+)(out)</text>
        <dbReference type="Rhea" id="RHEA:42608"/>
        <dbReference type="Rhea" id="RHEA-COMP:9561"/>
        <dbReference type="Rhea" id="RHEA-COMP:9562"/>
        <dbReference type="ChEBI" id="CHEBI:15378"/>
        <dbReference type="ChEBI" id="CHEBI:17757"/>
        <dbReference type="ChEBI" id="CHEBI:57540"/>
        <dbReference type="ChEBI" id="CHEBI:57945"/>
        <dbReference type="ChEBI" id="CHEBI:62192"/>
    </reaction>
</comment>
<comment type="catalytic activity">
    <reaction evidence="1">
        <text>a plastoquinone + NADPH + (n+1) H(+)(in) = a plastoquinol + NADP(+) + n H(+)(out)</text>
        <dbReference type="Rhea" id="RHEA:42612"/>
        <dbReference type="Rhea" id="RHEA-COMP:9561"/>
        <dbReference type="Rhea" id="RHEA-COMP:9562"/>
        <dbReference type="ChEBI" id="CHEBI:15378"/>
        <dbReference type="ChEBI" id="CHEBI:17757"/>
        <dbReference type="ChEBI" id="CHEBI:57783"/>
        <dbReference type="ChEBI" id="CHEBI:58349"/>
        <dbReference type="ChEBI" id="CHEBI:62192"/>
    </reaction>
</comment>
<comment type="cofactor">
    <cofactor evidence="1">
        <name>[4Fe-4S] cluster</name>
        <dbReference type="ChEBI" id="CHEBI:49883"/>
    </cofactor>
    <text evidence="1">Binds 2 [4Fe-4S] clusters per subunit.</text>
</comment>
<comment type="subunit">
    <text evidence="1">NDH is composed of at least 16 different subunits, 5 of which are encoded in the nucleus.</text>
</comment>
<comment type="subcellular location">
    <subcellularLocation>
        <location evidence="1">Plastid</location>
        <location evidence="1">Chloroplast thylakoid membrane</location>
        <topology evidence="1">Peripheral membrane protein</topology>
    </subcellularLocation>
</comment>
<comment type="similarity">
    <text evidence="1">Belongs to the complex I 23 kDa subunit family.</text>
</comment>
<evidence type="ECO:0000255" key="1">
    <source>
        <dbReference type="HAMAP-Rule" id="MF_01351"/>
    </source>
</evidence>
<geneLocation type="chloroplast"/>
<organism>
    <name type="scientific">Dahlia coccinea</name>
    <name type="common">Red dahlia</name>
    <dbReference type="NCBI Taxonomy" id="41563"/>
    <lineage>
        <taxon>Eukaryota</taxon>
        <taxon>Viridiplantae</taxon>
        <taxon>Streptophyta</taxon>
        <taxon>Embryophyta</taxon>
        <taxon>Tracheophyta</taxon>
        <taxon>Spermatophyta</taxon>
        <taxon>Magnoliopsida</taxon>
        <taxon>eudicotyledons</taxon>
        <taxon>Gunneridae</taxon>
        <taxon>Pentapetalae</taxon>
        <taxon>asterids</taxon>
        <taxon>campanulids</taxon>
        <taxon>Asterales</taxon>
        <taxon>Asteraceae</taxon>
        <taxon>Asteroideae</taxon>
        <taxon>Heliantheae alliance</taxon>
        <taxon>Coreopsideae</taxon>
        <taxon>Dahlia</taxon>
    </lineage>
</organism>
<accession>Q8HVU2</accession>
<keyword id="KW-0004">4Fe-4S</keyword>
<keyword id="KW-0150">Chloroplast</keyword>
<keyword id="KW-0408">Iron</keyword>
<keyword id="KW-0411">Iron-sulfur</keyword>
<keyword id="KW-0472">Membrane</keyword>
<keyword id="KW-0479">Metal-binding</keyword>
<keyword id="KW-0520">NAD</keyword>
<keyword id="KW-0521">NADP</keyword>
<keyword id="KW-0934">Plastid</keyword>
<keyword id="KW-0618">Plastoquinone</keyword>
<keyword id="KW-0874">Quinone</keyword>
<keyword id="KW-0677">Repeat</keyword>
<keyword id="KW-0793">Thylakoid</keyword>
<keyword id="KW-1278">Translocase</keyword>
<protein>
    <recommendedName>
        <fullName evidence="1">NAD(P)H-quinone oxidoreductase subunit I, chloroplastic</fullName>
        <ecNumber evidence="1">7.1.1.-</ecNumber>
    </recommendedName>
    <alternativeName>
        <fullName evidence="1">NAD(P)H dehydrogenase subunit I</fullName>
        <shortName evidence="1">NDH subunit I</shortName>
    </alternativeName>
    <alternativeName>
        <fullName evidence="1">NADH-plastoquinone oxidoreductase subunit I</fullName>
    </alternativeName>
</protein>
<proteinExistence type="inferred from homology"/>
<dbReference type="EC" id="7.1.1.-" evidence="1"/>
<dbReference type="EMBL" id="AF383770">
    <property type="protein sequence ID" value="AAN61712.1"/>
    <property type="molecule type" value="Genomic_DNA"/>
</dbReference>
<dbReference type="SMR" id="Q8HVU2"/>
<dbReference type="GO" id="GO:0009535">
    <property type="term" value="C:chloroplast thylakoid membrane"/>
    <property type="evidence" value="ECO:0007669"/>
    <property type="project" value="UniProtKB-SubCell"/>
</dbReference>
<dbReference type="GO" id="GO:0051539">
    <property type="term" value="F:4 iron, 4 sulfur cluster binding"/>
    <property type="evidence" value="ECO:0007669"/>
    <property type="project" value="UniProtKB-KW"/>
</dbReference>
<dbReference type="GO" id="GO:0005506">
    <property type="term" value="F:iron ion binding"/>
    <property type="evidence" value="ECO:0007669"/>
    <property type="project" value="UniProtKB-UniRule"/>
</dbReference>
<dbReference type="GO" id="GO:0008137">
    <property type="term" value="F:NADH dehydrogenase (ubiquinone) activity"/>
    <property type="evidence" value="ECO:0007669"/>
    <property type="project" value="InterPro"/>
</dbReference>
<dbReference type="GO" id="GO:0048038">
    <property type="term" value="F:quinone binding"/>
    <property type="evidence" value="ECO:0007669"/>
    <property type="project" value="UniProtKB-KW"/>
</dbReference>
<dbReference type="GO" id="GO:0019684">
    <property type="term" value="P:photosynthesis, light reaction"/>
    <property type="evidence" value="ECO:0007669"/>
    <property type="project" value="UniProtKB-UniRule"/>
</dbReference>
<dbReference type="FunFam" id="3.30.70.3270:FF:000006">
    <property type="entry name" value="NAD(P)H-quinone oxidoreductase subunit I, chloroplastic"/>
    <property type="match status" value="1"/>
</dbReference>
<dbReference type="Gene3D" id="3.30.70.3270">
    <property type="match status" value="1"/>
</dbReference>
<dbReference type="HAMAP" id="MF_01351">
    <property type="entry name" value="NDH1_NuoI"/>
    <property type="match status" value="1"/>
</dbReference>
<dbReference type="InterPro" id="IPR017896">
    <property type="entry name" value="4Fe4S_Fe-S-bd"/>
</dbReference>
<dbReference type="InterPro" id="IPR017900">
    <property type="entry name" value="4Fe4S_Fe_S_CS"/>
</dbReference>
<dbReference type="InterPro" id="IPR010226">
    <property type="entry name" value="NADH_quinone_OxRdtase_chainI"/>
</dbReference>
<dbReference type="InterPro" id="IPR004497">
    <property type="entry name" value="NDHI"/>
</dbReference>
<dbReference type="NCBIfam" id="TIGR00403">
    <property type="entry name" value="ndhI"/>
    <property type="match status" value="1"/>
</dbReference>
<dbReference type="NCBIfam" id="TIGR01971">
    <property type="entry name" value="NuoI"/>
    <property type="match status" value="1"/>
</dbReference>
<dbReference type="NCBIfam" id="NF004537">
    <property type="entry name" value="PRK05888.1-3"/>
    <property type="match status" value="1"/>
</dbReference>
<dbReference type="PANTHER" id="PTHR47275">
    <property type="entry name" value="NAD(P)H-QUINONE OXIDOREDUCTASE SUBUNIT I, CHLOROPLASTIC"/>
    <property type="match status" value="1"/>
</dbReference>
<dbReference type="PANTHER" id="PTHR47275:SF1">
    <property type="entry name" value="NAD(P)H-QUINONE OXIDOREDUCTASE SUBUNIT I, CHLOROPLASTIC"/>
    <property type="match status" value="1"/>
</dbReference>
<dbReference type="Pfam" id="PF00037">
    <property type="entry name" value="Fer4"/>
    <property type="match status" value="2"/>
</dbReference>
<dbReference type="SUPFAM" id="SSF54862">
    <property type="entry name" value="4Fe-4S ferredoxins"/>
    <property type="match status" value="1"/>
</dbReference>
<dbReference type="PROSITE" id="PS00198">
    <property type="entry name" value="4FE4S_FER_1"/>
    <property type="match status" value="2"/>
</dbReference>
<dbReference type="PROSITE" id="PS51379">
    <property type="entry name" value="4FE4S_FER_2"/>
    <property type="match status" value="2"/>
</dbReference>
<reference key="1">
    <citation type="submission" date="2003-01" db="EMBL/GenBank/DDBJ databases">
        <title>Chloroplast DNA phylogeny of tribe Heliantheae (Asteraceae).</title>
        <authorList>
            <person name="Panero J.L."/>
            <person name="Baldwin B.G."/>
            <person name="Schilling E.E."/>
            <person name="Clevinger J.A."/>
        </authorList>
    </citation>
    <scope>NUCLEOTIDE SEQUENCE [GENOMIC DNA]</scope>
</reference>
<sequence length="166" mass="19475">MFPMVTEFMNYGQQTVRAARYIGQGFMITLSHANRLPVTIQYPYEKLITSERFRGRIHFEFDKCIACEVCVRVCPIDLPVVDWKLETDIRKKRLLNYSIDFGICIFCGNCVEYCPTNCLSMTEEYELSTYDRHELNYNQIALGRLPMSIIDDYTIRTILNLPEIKT</sequence>
<feature type="chain" id="PRO_0000250773" description="NAD(P)H-quinone oxidoreductase subunit I, chloroplastic">
    <location>
        <begin position="1"/>
        <end position="166"/>
    </location>
</feature>
<feature type="domain" description="4Fe-4S ferredoxin-type 1" evidence="1">
    <location>
        <begin position="55"/>
        <end position="84"/>
    </location>
</feature>
<feature type="domain" description="4Fe-4S ferredoxin-type 2" evidence="1">
    <location>
        <begin position="95"/>
        <end position="124"/>
    </location>
</feature>
<feature type="binding site" evidence="1">
    <location>
        <position position="64"/>
    </location>
    <ligand>
        <name>[4Fe-4S] cluster</name>
        <dbReference type="ChEBI" id="CHEBI:49883"/>
        <label>1</label>
    </ligand>
</feature>
<feature type="binding site" evidence="1">
    <location>
        <position position="67"/>
    </location>
    <ligand>
        <name>[4Fe-4S] cluster</name>
        <dbReference type="ChEBI" id="CHEBI:49883"/>
        <label>1</label>
    </ligand>
</feature>
<feature type="binding site" evidence="1">
    <location>
        <position position="70"/>
    </location>
    <ligand>
        <name>[4Fe-4S] cluster</name>
        <dbReference type="ChEBI" id="CHEBI:49883"/>
        <label>1</label>
    </ligand>
</feature>
<feature type="binding site" evidence="1">
    <location>
        <position position="74"/>
    </location>
    <ligand>
        <name>[4Fe-4S] cluster</name>
        <dbReference type="ChEBI" id="CHEBI:49883"/>
        <label>2</label>
    </ligand>
</feature>
<feature type="binding site" evidence="1">
    <location>
        <position position="104"/>
    </location>
    <ligand>
        <name>[4Fe-4S] cluster</name>
        <dbReference type="ChEBI" id="CHEBI:49883"/>
        <label>2</label>
    </ligand>
</feature>
<feature type="binding site" evidence="1">
    <location>
        <position position="107"/>
    </location>
    <ligand>
        <name>[4Fe-4S] cluster</name>
        <dbReference type="ChEBI" id="CHEBI:49883"/>
        <label>2</label>
    </ligand>
</feature>
<feature type="binding site" evidence="1">
    <location>
        <position position="110"/>
    </location>
    <ligand>
        <name>[4Fe-4S] cluster</name>
        <dbReference type="ChEBI" id="CHEBI:49883"/>
        <label>2</label>
    </ligand>
</feature>
<feature type="binding site" evidence="1">
    <location>
        <position position="114"/>
    </location>
    <ligand>
        <name>[4Fe-4S] cluster</name>
        <dbReference type="ChEBI" id="CHEBI:49883"/>
        <label>1</label>
    </ligand>
</feature>
<name>NDHI_DAHCO</name>
<gene>
    <name evidence="1" type="primary">ndhI</name>
</gene>